<accession>P43905</accession>
<accession>A2RMG5</accession>
<sequence>MKLKINSQGLKGRLKVPGDKSISHRSIMFGSIAKGKTIIHDILRGEDVLSTIEAFRALGVEIEDDGQVITVHGQGISKLKEPEKALDMGNSGTSTRLLSGILAGLPFEATLFGDDSLSKRPMDRVATPLQMMGAEIVGQTDKVKLPMTIKGSAHLKAIDYILPVASAQVKSAVIFAALQAEGLTKVVEKEKTRSHTEEMLVQFGGEITVSDKTILVPGGQKLLGQEVTVPGDISSAAFWLVAGLVVENSGLILENVGINETRTGILEVIQAMGGQLEILEQDEVAKAATLKVKASQLKGTEISGDLIPRLIDELPIIALLATQAEGKTIIRDAAELKVKETDRIAVVADALNSMGANIEPTDDGMIIQGGTKLHAPENAINTLGDHRIGMMVAIAALLVENGEIELERAEAIQTSYPSFFDDLEKLSGNL</sequence>
<dbReference type="EC" id="2.5.1.19" evidence="1"/>
<dbReference type="EMBL" id="X78413">
    <property type="protein sequence ID" value="CAA55180.1"/>
    <property type="molecule type" value="Genomic_DNA"/>
</dbReference>
<dbReference type="EMBL" id="AM406671">
    <property type="protein sequence ID" value="CAL98495.1"/>
    <property type="molecule type" value="Genomic_DNA"/>
</dbReference>
<dbReference type="PIR" id="S52580">
    <property type="entry name" value="S52580"/>
</dbReference>
<dbReference type="RefSeq" id="WP_011835674.1">
    <property type="nucleotide sequence ID" value="NC_009004.1"/>
</dbReference>
<dbReference type="SMR" id="P43905"/>
<dbReference type="STRING" id="416870.llmg_1926"/>
<dbReference type="KEGG" id="llm:llmg_1926"/>
<dbReference type="eggNOG" id="COG0128">
    <property type="taxonomic scope" value="Bacteria"/>
</dbReference>
<dbReference type="HOGENOM" id="CLU_024321_0_1_9"/>
<dbReference type="OrthoDB" id="9809920at2"/>
<dbReference type="PhylomeDB" id="P43905"/>
<dbReference type="UniPathway" id="UPA00053">
    <property type="reaction ID" value="UER00089"/>
</dbReference>
<dbReference type="Proteomes" id="UP000000364">
    <property type="component" value="Chromosome"/>
</dbReference>
<dbReference type="GO" id="GO:0005737">
    <property type="term" value="C:cytoplasm"/>
    <property type="evidence" value="ECO:0007669"/>
    <property type="project" value="UniProtKB-SubCell"/>
</dbReference>
<dbReference type="GO" id="GO:0003866">
    <property type="term" value="F:3-phosphoshikimate 1-carboxyvinyltransferase activity"/>
    <property type="evidence" value="ECO:0007669"/>
    <property type="project" value="UniProtKB-UniRule"/>
</dbReference>
<dbReference type="GO" id="GO:0008652">
    <property type="term" value="P:amino acid biosynthetic process"/>
    <property type="evidence" value="ECO:0007669"/>
    <property type="project" value="UniProtKB-KW"/>
</dbReference>
<dbReference type="GO" id="GO:0009073">
    <property type="term" value="P:aromatic amino acid family biosynthetic process"/>
    <property type="evidence" value="ECO:0007669"/>
    <property type="project" value="UniProtKB-KW"/>
</dbReference>
<dbReference type="GO" id="GO:0009423">
    <property type="term" value="P:chorismate biosynthetic process"/>
    <property type="evidence" value="ECO:0007669"/>
    <property type="project" value="UniProtKB-UniRule"/>
</dbReference>
<dbReference type="CDD" id="cd01556">
    <property type="entry name" value="EPSP_synthase"/>
    <property type="match status" value="1"/>
</dbReference>
<dbReference type="FunFam" id="3.65.10.10:FF:000005">
    <property type="entry name" value="3-phosphoshikimate 1-carboxyvinyltransferase"/>
    <property type="match status" value="1"/>
</dbReference>
<dbReference type="FunFam" id="3.65.10.10:FF:000006">
    <property type="entry name" value="3-phosphoshikimate 1-carboxyvinyltransferase"/>
    <property type="match status" value="1"/>
</dbReference>
<dbReference type="Gene3D" id="3.65.10.10">
    <property type="entry name" value="Enolpyruvate transferase domain"/>
    <property type="match status" value="2"/>
</dbReference>
<dbReference type="HAMAP" id="MF_00210">
    <property type="entry name" value="EPSP_synth"/>
    <property type="match status" value="1"/>
</dbReference>
<dbReference type="InterPro" id="IPR001986">
    <property type="entry name" value="Enolpyruvate_Tfrase_dom"/>
</dbReference>
<dbReference type="InterPro" id="IPR036968">
    <property type="entry name" value="Enolpyruvate_Tfrase_sf"/>
</dbReference>
<dbReference type="InterPro" id="IPR006264">
    <property type="entry name" value="EPSP_synthase"/>
</dbReference>
<dbReference type="InterPro" id="IPR023193">
    <property type="entry name" value="EPSP_synthase_CS"/>
</dbReference>
<dbReference type="InterPro" id="IPR013792">
    <property type="entry name" value="RNA3'P_cycl/enolpyr_Trfase_a/b"/>
</dbReference>
<dbReference type="NCBIfam" id="TIGR01356">
    <property type="entry name" value="aroA"/>
    <property type="match status" value="1"/>
</dbReference>
<dbReference type="PANTHER" id="PTHR21090">
    <property type="entry name" value="AROM/DEHYDROQUINATE SYNTHASE"/>
    <property type="match status" value="1"/>
</dbReference>
<dbReference type="PANTHER" id="PTHR21090:SF5">
    <property type="entry name" value="PENTAFUNCTIONAL AROM POLYPEPTIDE"/>
    <property type="match status" value="1"/>
</dbReference>
<dbReference type="Pfam" id="PF00275">
    <property type="entry name" value="EPSP_synthase"/>
    <property type="match status" value="1"/>
</dbReference>
<dbReference type="PIRSF" id="PIRSF000505">
    <property type="entry name" value="EPSPS"/>
    <property type="match status" value="1"/>
</dbReference>
<dbReference type="SUPFAM" id="SSF55205">
    <property type="entry name" value="EPT/RTPC-like"/>
    <property type="match status" value="1"/>
</dbReference>
<dbReference type="PROSITE" id="PS00104">
    <property type="entry name" value="EPSP_SYNTHASE_1"/>
    <property type="match status" value="1"/>
</dbReference>
<dbReference type="PROSITE" id="PS00885">
    <property type="entry name" value="EPSP_SYNTHASE_2"/>
    <property type="match status" value="1"/>
</dbReference>
<gene>
    <name evidence="1" type="primary">aroA</name>
    <name type="ordered locus">llmg_1926</name>
</gene>
<comment type="function">
    <text evidence="1">Catalyzes the transfer of the enolpyruvyl moiety of phosphoenolpyruvate (PEP) to the 5-hydroxyl of shikimate-3-phosphate (S3P) to produce enolpyruvyl shikimate-3-phosphate and inorganic phosphate.</text>
</comment>
<comment type="catalytic activity">
    <reaction evidence="1">
        <text>3-phosphoshikimate + phosphoenolpyruvate = 5-O-(1-carboxyvinyl)-3-phosphoshikimate + phosphate</text>
        <dbReference type="Rhea" id="RHEA:21256"/>
        <dbReference type="ChEBI" id="CHEBI:43474"/>
        <dbReference type="ChEBI" id="CHEBI:57701"/>
        <dbReference type="ChEBI" id="CHEBI:58702"/>
        <dbReference type="ChEBI" id="CHEBI:145989"/>
        <dbReference type="EC" id="2.5.1.19"/>
    </reaction>
    <physiologicalReaction direction="left-to-right" evidence="1">
        <dbReference type="Rhea" id="RHEA:21257"/>
    </physiologicalReaction>
</comment>
<comment type="pathway">
    <text evidence="1">Metabolic intermediate biosynthesis; chorismate biosynthesis; chorismate from D-erythrose 4-phosphate and phosphoenolpyruvate: step 6/7.</text>
</comment>
<comment type="subunit">
    <text evidence="1">Monomer.</text>
</comment>
<comment type="subcellular location">
    <subcellularLocation>
        <location evidence="1">Cytoplasm</location>
    </subcellularLocation>
</comment>
<comment type="similarity">
    <text evidence="1 2">Belongs to the EPSP synthase family.</text>
</comment>
<reference key="1">
    <citation type="journal article" date="1995" name="Mol. Gen. Genet.">
        <title>Genetic aspects of aromatic amino acid biosynthesis in Lactococcus lactis.</title>
        <authorList>
            <person name="Griffin H.G."/>
            <person name="Gasson M.J."/>
        </authorList>
    </citation>
    <scope>NUCLEOTIDE SEQUENCE [GENOMIC DNA]</scope>
    <source>
        <strain>MG1363 / F15876</strain>
    </source>
</reference>
<reference key="2">
    <citation type="journal article" date="2007" name="J. Bacteriol.">
        <title>The complete genome sequence of the lactic acid bacterial paradigm Lactococcus lactis subsp. cremoris MG1363.</title>
        <authorList>
            <person name="Wegmann U."/>
            <person name="O'Connell-Motherway M."/>
            <person name="Zomer A."/>
            <person name="Buist G."/>
            <person name="Shearman C."/>
            <person name="Canchaya C."/>
            <person name="Ventura M."/>
            <person name="Goesmann A."/>
            <person name="Gasson M.J."/>
            <person name="Kuipers O.P."/>
            <person name="van Sinderen D."/>
            <person name="Kok J."/>
        </authorList>
    </citation>
    <scope>NUCLEOTIDE SEQUENCE [LARGE SCALE GENOMIC DNA]</scope>
    <source>
        <strain>MG1363</strain>
    </source>
</reference>
<name>AROA_LACLM</name>
<organism>
    <name type="scientific">Lactococcus lactis subsp. cremoris (strain MG1363)</name>
    <dbReference type="NCBI Taxonomy" id="416870"/>
    <lineage>
        <taxon>Bacteria</taxon>
        <taxon>Bacillati</taxon>
        <taxon>Bacillota</taxon>
        <taxon>Bacilli</taxon>
        <taxon>Lactobacillales</taxon>
        <taxon>Streptococcaceae</taxon>
        <taxon>Lactococcus</taxon>
        <taxon>Lactococcus cremoris subsp. cremoris</taxon>
    </lineage>
</organism>
<keyword id="KW-0028">Amino-acid biosynthesis</keyword>
<keyword id="KW-0057">Aromatic amino acid biosynthesis</keyword>
<keyword id="KW-0963">Cytoplasm</keyword>
<keyword id="KW-0808">Transferase</keyword>
<protein>
    <recommendedName>
        <fullName evidence="1">3-phosphoshikimate 1-carboxyvinyltransferase</fullName>
        <ecNumber evidence="1">2.5.1.19</ecNumber>
    </recommendedName>
    <alternativeName>
        <fullName evidence="1">5-enolpyruvylshikimate-3-phosphate synthase</fullName>
        <shortName evidence="1">EPSP synthase</shortName>
        <shortName evidence="1">EPSPS</shortName>
    </alternativeName>
</protein>
<evidence type="ECO:0000255" key="1">
    <source>
        <dbReference type="HAMAP-Rule" id="MF_00210"/>
    </source>
</evidence>
<evidence type="ECO:0000305" key="2"/>
<feature type="chain" id="PRO_0000088264" description="3-phosphoshikimate 1-carboxyvinyltransferase">
    <location>
        <begin position="1"/>
        <end position="430"/>
    </location>
</feature>
<feature type="active site" description="Proton acceptor" evidence="1">
    <location>
        <position position="312"/>
    </location>
</feature>
<feature type="binding site" evidence="1">
    <location>
        <position position="20"/>
    </location>
    <ligand>
        <name>3-phosphoshikimate</name>
        <dbReference type="ChEBI" id="CHEBI:145989"/>
    </ligand>
</feature>
<feature type="binding site" evidence="1">
    <location>
        <position position="20"/>
    </location>
    <ligand>
        <name>phosphoenolpyruvate</name>
        <dbReference type="ChEBI" id="CHEBI:58702"/>
    </ligand>
</feature>
<feature type="binding site" evidence="1">
    <location>
        <position position="21"/>
    </location>
    <ligand>
        <name>3-phosphoshikimate</name>
        <dbReference type="ChEBI" id="CHEBI:145989"/>
    </ligand>
</feature>
<feature type="binding site" evidence="1">
    <location>
        <position position="25"/>
    </location>
    <ligand>
        <name>3-phosphoshikimate</name>
        <dbReference type="ChEBI" id="CHEBI:145989"/>
    </ligand>
</feature>
<feature type="binding site" evidence="1">
    <location>
        <position position="92"/>
    </location>
    <ligand>
        <name>phosphoenolpyruvate</name>
        <dbReference type="ChEBI" id="CHEBI:58702"/>
    </ligand>
</feature>
<feature type="binding site" evidence="1">
    <location>
        <position position="120"/>
    </location>
    <ligand>
        <name>phosphoenolpyruvate</name>
        <dbReference type="ChEBI" id="CHEBI:58702"/>
    </ligand>
</feature>
<feature type="binding site" evidence="1">
    <location>
        <position position="166"/>
    </location>
    <ligand>
        <name>3-phosphoshikimate</name>
        <dbReference type="ChEBI" id="CHEBI:145989"/>
    </ligand>
</feature>
<feature type="binding site" evidence="1">
    <location>
        <position position="168"/>
    </location>
    <ligand>
        <name>3-phosphoshikimate</name>
        <dbReference type="ChEBI" id="CHEBI:145989"/>
    </ligand>
</feature>
<feature type="binding site" evidence="1">
    <location>
        <position position="168"/>
    </location>
    <ligand>
        <name>phosphoenolpyruvate</name>
        <dbReference type="ChEBI" id="CHEBI:58702"/>
    </ligand>
</feature>
<feature type="binding site" evidence="1">
    <location>
        <position position="312"/>
    </location>
    <ligand>
        <name>3-phosphoshikimate</name>
        <dbReference type="ChEBI" id="CHEBI:145989"/>
    </ligand>
</feature>
<feature type="binding site" evidence="1">
    <location>
        <position position="339"/>
    </location>
    <ligand>
        <name>3-phosphoshikimate</name>
        <dbReference type="ChEBI" id="CHEBI:145989"/>
    </ligand>
</feature>
<feature type="binding site" evidence="1">
    <location>
        <position position="343"/>
    </location>
    <ligand>
        <name>phosphoenolpyruvate</name>
        <dbReference type="ChEBI" id="CHEBI:58702"/>
    </ligand>
</feature>
<feature type="binding site" evidence="1">
    <location>
        <position position="387"/>
    </location>
    <ligand>
        <name>phosphoenolpyruvate</name>
        <dbReference type="ChEBI" id="CHEBI:58702"/>
    </ligand>
</feature>
<proteinExistence type="inferred from homology"/>